<evidence type="ECO:0000255" key="1">
    <source>
        <dbReference type="HAMAP-Rule" id="MF_00170"/>
    </source>
</evidence>
<proteinExistence type="inferred from homology"/>
<keyword id="KW-0413">Isomerase</keyword>
<name>RPIA_CHLTA</name>
<accession>Q3KME9</accession>
<protein>
    <recommendedName>
        <fullName evidence="1">Ribose-5-phosphate isomerase A</fullName>
        <ecNumber evidence="1">5.3.1.6</ecNumber>
    </recommendedName>
    <alternativeName>
        <fullName evidence="1">Phosphoriboisomerase A</fullName>
        <shortName evidence="1">PRI</shortName>
    </alternativeName>
</protein>
<feature type="chain" id="PRO_1000016920" description="Ribose-5-phosphate isomerase A">
    <location>
        <begin position="1"/>
        <end position="242"/>
    </location>
</feature>
<feature type="active site" description="Proton acceptor" evidence="1">
    <location>
        <position position="117"/>
    </location>
</feature>
<feature type="binding site" evidence="1">
    <location>
        <begin position="39"/>
        <end position="42"/>
    </location>
    <ligand>
        <name>substrate</name>
    </ligand>
</feature>
<feature type="binding site" evidence="1">
    <location>
        <begin position="95"/>
        <end position="98"/>
    </location>
    <ligand>
        <name>substrate</name>
    </ligand>
</feature>
<feature type="binding site" evidence="1">
    <location>
        <begin position="108"/>
        <end position="111"/>
    </location>
    <ligand>
        <name>substrate</name>
    </ligand>
</feature>
<feature type="binding site" evidence="1">
    <location>
        <position position="135"/>
    </location>
    <ligand>
        <name>substrate</name>
    </ligand>
</feature>
<gene>
    <name evidence="1" type="primary">rpiA</name>
    <name type="ordered locus">CTA_0233</name>
</gene>
<dbReference type="EC" id="5.3.1.6" evidence="1"/>
<dbReference type="EMBL" id="CP000051">
    <property type="protein sequence ID" value="AAX50473.1"/>
    <property type="molecule type" value="Genomic_DNA"/>
</dbReference>
<dbReference type="RefSeq" id="WP_011324643.1">
    <property type="nucleotide sequence ID" value="NC_007429.1"/>
</dbReference>
<dbReference type="SMR" id="Q3KME9"/>
<dbReference type="KEGG" id="cta:CTA_0233"/>
<dbReference type="HOGENOM" id="CLU_056590_1_0_0"/>
<dbReference type="UniPathway" id="UPA00115">
    <property type="reaction ID" value="UER00412"/>
</dbReference>
<dbReference type="Proteomes" id="UP000002532">
    <property type="component" value="Chromosome"/>
</dbReference>
<dbReference type="GO" id="GO:0004751">
    <property type="term" value="F:ribose-5-phosphate isomerase activity"/>
    <property type="evidence" value="ECO:0007669"/>
    <property type="project" value="UniProtKB-UniRule"/>
</dbReference>
<dbReference type="GO" id="GO:0009052">
    <property type="term" value="P:pentose-phosphate shunt, non-oxidative branch"/>
    <property type="evidence" value="ECO:0007669"/>
    <property type="project" value="UniProtKB-UniRule"/>
</dbReference>
<dbReference type="CDD" id="cd01398">
    <property type="entry name" value="RPI_A"/>
    <property type="match status" value="1"/>
</dbReference>
<dbReference type="FunFam" id="3.40.50.1360:FF:000001">
    <property type="entry name" value="Ribose-5-phosphate isomerase A"/>
    <property type="match status" value="1"/>
</dbReference>
<dbReference type="Gene3D" id="3.30.70.260">
    <property type="match status" value="1"/>
</dbReference>
<dbReference type="Gene3D" id="3.40.50.1360">
    <property type="match status" value="1"/>
</dbReference>
<dbReference type="HAMAP" id="MF_00170">
    <property type="entry name" value="Rib_5P_isom_A"/>
    <property type="match status" value="1"/>
</dbReference>
<dbReference type="InterPro" id="IPR037171">
    <property type="entry name" value="NagB/RpiA_transferase-like"/>
</dbReference>
<dbReference type="InterPro" id="IPR050262">
    <property type="entry name" value="Ribose-5P_isomerase"/>
</dbReference>
<dbReference type="InterPro" id="IPR020672">
    <property type="entry name" value="Ribose5P_isomerase_typA_subgr"/>
</dbReference>
<dbReference type="InterPro" id="IPR004788">
    <property type="entry name" value="Ribose5P_isomerase_type_A"/>
</dbReference>
<dbReference type="NCBIfam" id="NF001924">
    <property type="entry name" value="PRK00702.1"/>
    <property type="match status" value="1"/>
</dbReference>
<dbReference type="NCBIfam" id="TIGR00021">
    <property type="entry name" value="rpiA"/>
    <property type="match status" value="1"/>
</dbReference>
<dbReference type="PANTHER" id="PTHR43748">
    <property type="entry name" value="RIBOSE-5-PHOSPHATE ISOMERASE 3, CHLOROPLASTIC-RELATED"/>
    <property type="match status" value="1"/>
</dbReference>
<dbReference type="PANTHER" id="PTHR43748:SF3">
    <property type="entry name" value="RIBOSE-5-PHOSPHATE ISOMERASE 3, CHLOROPLASTIC-RELATED"/>
    <property type="match status" value="1"/>
</dbReference>
<dbReference type="Pfam" id="PF06026">
    <property type="entry name" value="Rib_5-P_isom_A"/>
    <property type="match status" value="1"/>
</dbReference>
<dbReference type="SUPFAM" id="SSF75445">
    <property type="entry name" value="D-ribose-5-phosphate isomerase (RpiA), lid domain"/>
    <property type="match status" value="1"/>
</dbReference>
<dbReference type="SUPFAM" id="SSF100950">
    <property type="entry name" value="NagB/RpiA/CoA transferase-like"/>
    <property type="match status" value="1"/>
</dbReference>
<reference key="1">
    <citation type="journal article" date="2005" name="Infect. Immun.">
        <title>Comparative genomic analysis of Chlamydia trachomatis oculotropic and genitotropic strains.</title>
        <authorList>
            <person name="Carlson J.H."/>
            <person name="Porcella S.F."/>
            <person name="McClarty G."/>
            <person name="Caldwell H.D."/>
        </authorList>
    </citation>
    <scope>NUCLEOTIDE SEQUENCE [LARGE SCALE GENOMIC DNA]</scope>
    <source>
        <strain>ATCC VR-571B / DSM 19440 / HAR-13</strain>
    </source>
</reference>
<comment type="function">
    <text evidence="1">Catalyzes the reversible conversion of ribose-5-phosphate to ribulose 5-phosphate.</text>
</comment>
<comment type="catalytic activity">
    <reaction evidence="1">
        <text>aldehydo-D-ribose 5-phosphate = D-ribulose 5-phosphate</text>
        <dbReference type="Rhea" id="RHEA:14657"/>
        <dbReference type="ChEBI" id="CHEBI:58121"/>
        <dbReference type="ChEBI" id="CHEBI:58273"/>
        <dbReference type="EC" id="5.3.1.6"/>
    </reaction>
</comment>
<comment type="pathway">
    <text evidence="1">Carbohydrate degradation; pentose phosphate pathway; D-ribose 5-phosphate from D-ribulose 5-phosphate (non-oxidative stage): step 1/1.</text>
</comment>
<comment type="subunit">
    <text evidence="1">Homodimer.</text>
</comment>
<comment type="similarity">
    <text evidence="1">Belongs to the ribose 5-phosphate isomerase family.</text>
</comment>
<sequence length="242" mass="26672">MSKQPENSFSSDKFFPIKQKLALEAVALVEPGMCVGLGSGSTAREFILALGDRVRTERLVITAVASSRISQLLAEAVGIPLLDHSLLQDVDLVVDGADEVDPCLRMIKGGGGALFREKILLQSGKRNVILVDERKLVPTLGKFSLPIEIAPFGCSSVQRILNKQGYFGEWRETSAGERFITDNGNYIYDVRTPDSYANPEEDMIRLLQIRGIIDVGFVIAKAEVWVGYADGSIVRKKKHNEY</sequence>
<organism>
    <name type="scientific">Chlamydia trachomatis serovar A (strain ATCC VR-571B / DSM 19440 / HAR-13)</name>
    <dbReference type="NCBI Taxonomy" id="315277"/>
    <lineage>
        <taxon>Bacteria</taxon>
        <taxon>Pseudomonadati</taxon>
        <taxon>Chlamydiota</taxon>
        <taxon>Chlamydiia</taxon>
        <taxon>Chlamydiales</taxon>
        <taxon>Chlamydiaceae</taxon>
        <taxon>Chlamydia/Chlamydophila group</taxon>
        <taxon>Chlamydia</taxon>
    </lineage>
</organism>